<comment type="function">
    <text evidence="1">Catalyzes the reversible isomerization of glucose-6-phosphate to fructose-6-phosphate.</text>
</comment>
<comment type="catalytic activity">
    <reaction evidence="1">
        <text>alpha-D-glucose 6-phosphate = beta-D-fructose 6-phosphate</text>
        <dbReference type="Rhea" id="RHEA:11816"/>
        <dbReference type="ChEBI" id="CHEBI:57634"/>
        <dbReference type="ChEBI" id="CHEBI:58225"/>
        <dbReference type="EC" id="5.3.1.9"/>
    </reaction>
</comment>
<comment type="pathway">
    <text evidence="1">Carbohydrate biosynthesis; gluconeogenesis.</text>
</comment>
<comment type="pathway">
    <text evidence="1">Carbohydrate degradation; glycolysis; D-glyceraldehyde 3-phosphate and glycerone phosphate from D-glucose: step 2/4.</text>
</comment>
<comment type="interaction">
    <interactant intactId="EBI-15584961">
        <id>Q8A5W2</id>
    </interactant>
    <interactant intactId="EBI-15584902">
        <id>Q8A2Y3</id>
        <label>BT_3172</label>
    </interactant>
    <organismsDiffer>false</organismsDiffer>
    <experiments>3</experiments>
</comment>
<comment type="subcellular location">
    <subcellularLocation>
        <location evidence="1">Cytoplasm</location>
    </subcellularLocation>
</comment>
<comment type="similarity">
    <text evidence="1">Belongs to the GPI family.</text>
</comment>
<name>G6PI_BACTN</name>
<gene>
    <name evidence="1" type="primary">pgi</name>
    <name type="ordered locus">BT_2124</name>
</gene>
<protein>
    <recommendedName>
        <fullName evidence="1">Glucose-6-phosphate isomerase</fullName>
        <shortName evidence="1">GPI</shortName>
        <ecNumber evidence="1">5.3.1.9</ecNumber>
    </recommendedName>
    <alternativeName>
        <fullName evidence="1">Phosphoglucose isomerase</fullName>
        <shortName evidence="1">PGI</shortName>
    </alternativeName>
    <alternativeName>
        <fullName evidence="1">Phosphohexose isomerase</fullName>
        <shortName evidence="1">PHI</shortName>
    </alternativeName>
</protein>
<evidence type="ECO:0000255" key="1">
    <source>
        <dbReference type="HAMAP-Rule" id="MF_00473"/>
    </source>
</evidence>
<keyword id="KW-0963">Cytoplasm</keyword>
<keyword id="KW-0312">Gluconeogenesis</keyword>
<keyword id="KW-0324">Glycolysis</keyword>
<keyword id="KW-0413">Isomerase</keyword>
<keyword id="KW-1185">Reference proteome</keyword>
<accession>Q8A5W2</accession>
<dbReference type="EC" id="5.3.1.9" evidence="1"/>
<dbReference type="EMBL" id="AE015928">
    <property type="protein sequence ID" value="AAO77231.1"/>
    <property type="molecule type" value="Genomic_DNA"/>
</dbReference>
<dbReference type="RefSeq" id="NP_811037.1">
    <property type="nucleotide sequence ID" value="NC_004663.1"/>
</dbReference>
<dbReference type="RefSeq" id="WP_008759774.1">
    <property type="nucleotide sequence ID" value="NC_004663.1"/>
</dbReference>
<dbReference type="SMR" id="Q8A5W2"/>
<dbReference type="DIP" id="DIP-61177N"/>
<dbReference type="FunCoup" id="Q8A5W2">
    <property type="interactions" value="490"/>
</dbReference>
<dbReference type="IntAct" id="Q8A5W2">
    <property type="interactions" value="1"/>
</dbReference>
<dbReference type="STRING" id="226186.BT_2124"/>
<dbReference type="PaxDb" id="226186-BT_2124"/>
<dbReference type="EnsemblBacteria" id="AAO77231">
    <property type="protein sequence ID" value="AAO77231"/>
    <property type="gene ID" value="BT_2124"/>
</dbReference>
<dbReference type="KEGG" id="bth:BT_2124"/>
<dbReference type="PATRIC" id="fig|226186.12.peg.2186"/>
<dbReference type="eggNOG" id="COG0166">
    <property type="taxonomic scope" value="Bacteria"/>
</dbReference>
<dbReference type="HOGENOM" id="CLU_037303_0_1_10"/>
<dbReference type="InParanoid" id="Q8A5W2"/>
<dbReference type="OrthoDB" id="140919at2"/>
<dbReference type="UniPathway" id="UPA00109">
    <property type="reaction ID" value="UER00181"/>
</dbReference>
<dbReference type="UniPathway" id="UPA00138"/>
<dbReference type="Proteomes" id="UP000001414">
    <property type="component" value="Chromosome"/>
</dbReference>
<dbReference type="GO" id="GO:0005829">
    <property type="term" value="C:cytosol"/>
    <property type="evidence" value="ECO:0000318"/>
    <property type="project" value="GO_Central"/>
</dbReference>
<dbReference type="GO" id="GO:0097367">
    <property type="term" value="F:carbohydrate derivative binding"/>
    <property type="evidence" value="ECO:0007669"/>
    <property type="project" value="InterPro"/>
</dbReference>
<dbReference type="GO" id="GO:0004347">
    <property type="term" value="F:glucose-6-phosphate isomerase activity"/>
    <property type="evidence" value="ECO:0000318"/>
    <property type="project" value="GO_Central"/>
</dbReference>
<dbReference type="GO" id="GO:0048029">
    <property type="term" value="F:monosaccharide binding"/>
    <property type="evidence" value="ECO:0000318"/>
    <property type="project" value="GO_Central"/>
</dbReference>
<dbReference type="GO" id="GO:0006094">
    <property type="term" value="P:gluconeogenesis"/>
    <property type="evidence" value="ECO:0000318"/>
    <property type="project" value="GO_Central"/>
</dbReference>
<dbReference type="GO" id="GO:0051156">
    <property type="term" value="P:glucose 6-phosphate metabolic process"/>
    <property type="evidence" value="ECO:0000318"/>
    <property type="project" value="GO_Central"/>
</dbReference>
<dbReference type="GO" id="GO:0006096">
    <property type="term" value="P:glycolytic process"/>
    <property type="evidence" value="ECO:0000318"/>
    <property type="project" value="GO_Central"/>
</dbReference>
<dbReference type="CDD" id="cd05015">
    <property type="entry name" value="SIS_PGI_1"/>
    <property type="match status" value="1"/>
</dbReference>
<dbReference type="CDD" id="cd05016">
    <property type="entry name" value="SIS_PGI_2"/>
    <property type="match status" value="1"/>
</dbReference>
<dbReference type="FunFam" id="3.40.50.10490:FF:000015">
    <property type="entry name" value="Glucose-6-phosphate isomerase"/>
    <property type="match status" value="1"/>
</dbReference>
<dbReference type="FunFam" id="3.40.50.10490:FF:000016">
    <property type="entry name" value="Glucose-6-phosphate isomerase"/>
    <property type="match status" value="1"/>
</dbReference>
<dbReference type="Gene3D" id="3.40.50.10490">
    <property type="entry name" value="Glucose-6-phosphate isomerase like protein, domain 1"/>
    <property type="match status" value="2"/>
</dbReference>
<dbReference type="HAMAP" id="MF_00473">
    <property type="entry name" value="G6P_isomerase"/>
    <property type="match status" value="1"/>
</dbReference>
<dbReference type="InterPro" id="IPR001672">
    <property type="entry name" value="G6P_Isomerase"/>
</dbReference>
<dbReference type="InterPro" id="IPR018189">
    <property type="entry name" value="Phosphoglucose_isomerase_CS"/>
</dbReference>
<dbReference type="InterPro" id="IPR046348">
    <property type="entry name" value="SIS_dom_sf"/>
</dbReference>
<dbReference type="InterPro" id="IPR035476">
    <property type="entry name" value="SIS_PGI_1"/>
</dbReference>
<dbReference type="InterPro" id="IPR035482">
    <property type="entry name" value="SIS_PGI_2"/>
</dbReference>
<dbReference type="NCBIfam" id="NF010697">
    <property type="entry name" value="PRK14097.1"/>
    <property type="match status" value="1"/>
</dbReference>
<dbReference type="PANTHER" id="PTHR11469">
    <property type="entry name" value="GLUCOSE-6-PHOSPHATE ISOMERASE"/>
    <property type="match status" value="1"/>
</dbReference>
<dbReference type="PANTHER" id="PTHR11469:SF1">
    <property type="entry name" value="GLUCOSE-6-PHOSPHATE ISOMERASE"/>
    <property type="match status" value="1"/>
</dbReference>
<dbReference type="Pfam" id="PF00342">
    <property type="entry name" value="PGI"/>
    <property type="match status" value="1"/>
</dbReference>
<dbReference type="PRINTS" id="PR00662">
    <property type="entry name" value="G6PISOMERASE"/>
</dbReference>
<dbReference type="SUPFAM" id="SSF53697">
    <property type="entry name" value="SIS domain"/>
    <property type="match status" value="1"/>
</dbReference>
<dbReference type="PROSITE" id="PS00765">
    <property type="entry name" value="P_GLUCOSE_ISOMERASE_1"/>
    <property type="match status" value="1"/>
</dbReference>
<dbReference type="PROSITE" id="PS00174">
    <property type="entry name" value="P_GLUCOSE_ISOMERASE_2"/>
    <property type="match status" value="1"/>
</dbReference>
<dbReference type="PROSITE" id="PS51463">
    <property type="entry name" value="P_GLUCOSE_ISOMERASE_3"/>
    <property type="match status" value="1"/>
</dbReference>
<reference key="1">
    <citation type="journal article" date="2003" name="Science">
        <title>A genomic view of the human-Bacteroides thetaiotaomicron symbiosis.</title>
        <authorList>
            <person name="Xu J."/>
            <person name="Bjursell M.K."/>
            <person name="Himrod J."/>
            <person name="Deng S."/>
            <person name="Carmichael L.K."/>
            <person name="Chiang H.C."/>
            <person name="Hooper L.V."/>
            <person name="Gordon J.I."/>
        </authorList>
    </citation>
    <scope>NUCLEOTIDE SEQUENCE [LARGE SCALE GENOMIC DNA]</scope>
    <source>
        <strain>ATCC 29148 / DSM 2079 / JCM 5827 / CCUG 10774 / NCTC 10582 / VPI-5482 / E50</strain>
    </source>
</reference>
<proteinExistence type="evidence at protein level"/>
<sequence>MISLNIEKTFGFISKEKVSAYEAEVKAAQEMLEKGTGEGNDFLGWLHLPSSISKEHLADLNATAKVLRDNCEVVIVAGIGGSYLGARAVIEALSNSFTWLQDKKTAPVMIYAGHNISEDYLYELTEYLKDKKFGVINISKSGTTTETALAFRLLKKQCEDQRGKETAKKVIVAVTDAKKGAARVTADKEGYKTFIIPDNVGGRFSVLTPVGLLPIAVAGFDIDKLVAGAADMEKACGSDVPFAENPAAIYAATRNELYRQGKKIEILVNFCPKLHYVSEWWKQLYGESEGKDNKGIFPASVDFSTDLHSMGQWIQEGERSIFETVISLDKVDHKLEVPFDEANLDGLNFLAGKRVDEVNKMAELGTQLAHVDGGVPNMRIVLPELSEYNIGGLLYFFEKACGISGYLLGVNPFNQPGVEAYKKNMFALLNKPGYEEESKAIQAKL</sequence>
<feature type="chain" id="PRO_0000180597" description="Glucose-6-phosphate isomerase">
    <location>
        <begin position="1"/>
        <end position="445"/>
    </location>
</feature>
<feature type="active site" description="Proton donor" evidence="1">
    <location>
        <position position="287"/>
    </location>
</feature>
<feature type="active site" evidence="1">
    <location>
        <position position="308"/>
    </location>
</feature>
<feature type="active site" evidence="1">
    <location>
        <position position="422"/>
    </location>
</feature>
<organism>
    <name type="scientific">Bacteroides thetaiotaomicron (strain ATCC 29148 / DSM 2079 / JCM 5827 / CCUG 10774 / NCTC 10582 / VPI-5482 / E50)</name>
    <dbReference type="NCBI Taxonomy" id="226186"/>
    <lineage>
        <taxon>Bacteria</taxon>
        <taxon>Pseudomonadati</taxon>
        <taxon>Bacteroidota</taxon>
        <taxon>Bacteroidia</taxon>
        <taxon>Bacteroidales</taxon>
        <taxon>Bacteroidaceae</taxon>
        <taxon>Bacteroides</taxon>
    </lineage>
</organism>